<sequence length="252" mass="27697">MILHAQAKHGKPGLPWLVFLHGFSGDCHEWQEVGEAFADYSRLYVDLPGHGGSAAISVDGFDDVTDLLRKTLVSYNILDFWLVGYSLGGRVAMMAACQGLAGLCGVIVEGGHPGLQNAEQRAERQRSDRQWAQRFRTEPLTAVFADWYQQPVFASLNDDQRRELVALRSNNNGATLAAMLEATSLAVQPDLRANLSARTFAFYYLCGERDSKFRALAAELAADCHVIPRAGHNAHRENPAGVIASLAQILRF</sequence>
<gene>
    <name evidence="1" type="primary">menH</name>
    <name type="ordered locus">EC55989_2511</name>
</gene>
<accession>B7LAS9</accession>
<proteinExistence type="inferred from homology"/>
<reference key="1">
    <citation type="journal article" date="2009" name="PLoS Genet.">
        <title>Organised genome dynamics in the Escherichia coli species results in highly diverse adaptive paths.</title>
        <authorList>
            <person name="Touchon M."/>
            <person name="Hoede C."/>
            <person name="Tenaillon O."/>
            <person name="Barbe V."/>
            <person name="Baeriswyl S."/>
            <person name="Bidet P."/>
            <person name="Bingen E."/>
            <person name="Bonacorsi S."/>
            <person name="Bouchier C."/>
            <person name="Bouvet O."/>
            <person name="Calteau A."/>
            <person name="Chiapello H."/>
            <person name="Clermont O."/>
            <person name="Cruveiller S."/>
            <person name="Danchin A."/>
            <person name="Diard M."/>
            <person name="Dossat C."/>
            <person name="Karoui M.E."/>
            <person name="Frapy E."/>
            <person name="Garry L."/>
            <person name="Ghigo J.M."/>
            <person name="Gilles A.M."/>
            <person name="Johnson J."/>
            <person name="Le Bouguenec C."/>
            <person name="Lescat M."/>
            <person name="Mangenot S."/>
            <person name="Martinez-Jehanne V."/>
            <person name="Matic I."/>
            <person name="Nassif X."/>
            <person name="Oztas S."/>
            <person name="Petit M.A."/>
            <person name="Pichon C."/>
            <person name="Rouy Z."/>
            <person name="Ruf C.S."/>
            <person name="Schneider D."/>
            <person name="Tourret J."/>
            <person name="Vacherie B."/>
            <person name="Vallenet D."/>
            <person name="Medigue C."/>
            <person name="Rocha E.P.C."/>
            <person name="Denamur E."/>
        </authorList>
    </citation>
    <scope>NUCLEOTIDE SEQUENCE [LARGE SCALE GENOMIC DNA]</scope>
    <source>
        <strain>55989 / EAEC</strain>
    </source>
</reference>
<protein>
    <recommendedName>
        <fullName evidence="1">2-succinyl-6-hydroxy-2,4-cyclohexadiene-1-carboxylate synthase</fullName>
        <shortName evidence="1">SHCHC synthase</shortName>
        <ecNumber evidence="1">4.2.99.20</ecNumber>
    </recommendedName>
</protein>
<name>MENH_ECO55</name>
<dbReference type="EC" id="4.2.99.20" evidence="1"/>
<dbReference type="EMBL" id="CU928145">
    <property type="protein sequence ID" value="CAU98379.1"/>
    <property type="molecule type" value="Genomic_DNA"/>
</dbReference>
<dbReference type="RefSeq" id="WP_000600496.1">
    <property type="nucleotide sequence ID" value="NC_011748.1"/>
</dbReference>
<dbReference type="SMR" id="B7LAS9"/>
<dbReference type="ESTHER" id="ecoli-YFBB">
    <property type="family name" value="MenH_SHCHC"/>
</dbReference>
<dbReference type="MEROPS" id="S33.996"/>
<dbReference type="GeneID" id="75205686"/>
<dbReference type="KEGG" id="eck:EC55989_2511"/>
<dbReference type="HOGENOM" id="CLU_020336_38_2_6"/>
<dbReference type="UniPathway" id="UPA00079"/>
<dbReference type="UniPathway" id="UPA01057">
    <property type="reaction ID" value="UER00900"/>
</dbReference>
<dbReference type="Proteomes" id="UP000000746">
    <property type="component" value="Chromosome"/>
</dbReference>
<dbReference type="GO" id="GO:0070205">
    <property type="term" value="F:2-succinyl-6-hydroxy-2,4-cyclohexadiene-1-carboxylate synthase activity"/>
    <property type="evidence" value="ECO:0007669"/>
    <property type="project" value="UniProtKB-UniRule"/>
</dbReference>
<dbReference type="GO" id="GO:0009234">
    <property type="term" value="P:menaquinone biosynthetic process"/>
    <property type="evidence" value="ECO:0007669"/>
    <property type="project" value="UniProtKB-UniRule"/>
</dbReference>
<dbReference type="FunFam" id="3.40.50.1820:FF:000038">
    <property type="entry name" value="2-succinyl-6-hydroxy-2,4-cyclohexadiene-1-carboxylate synthase"/>
    <property type="match status" value="1"/>
</dbReference>
<dbReference type="Gene3D" id="3.40.50.1820">
    <property type="entry name" value="alpha/beta hydrolase"/>
    <property type="match status" value="1"/>
</dbReference>
<dbReference type="HAMAP" id="MF_01660">
    <property type="entry name" value="MenH"/>
    <property type="match status" value="1"/>
</dbReference>
<dbReference type="InterPro" id="IPR000073">
    <property type="entry name" value="AB_hydrolase_1"/>
</dbReference>
<dbReference type="InterPro" id="IPR029058">
    <property type="entry name" value="AB_hydrolase_fold"/>
</dbReference>
<dbReference type="InterPro" id="IPR022485">
    <property type="entry name" value="SHCHC_synthase_MenH"/>
</dbReference>
<dbReference type="NCBIfam" id="TIGR03695">
    <property type="entry name" value="menH_SHCHC"/>
    <property type="match status" value="1"/>
</dbReference>
<dbReference type="NCBIfam" id="NF008340">
    <property type="entry name" value="PRK11126.1"/>
    <property type="match status" value="1"/>
</dbReference>
<dbReference type="PANTHER" id="PTHR42916">
    <property type="entry name" value="2-SUCCINYL-5-ENOLPYRUVYL-6-HYDROXY-3-CYCLOHEXENE-1-CARBOXYLATE SYNTHASE"/>
    <property type="match status" value="1"/>
</dbReference>
<dbReference type="PANTHER" id="PTHR42916:SF1">
    <property type="entry name" value="PROTEIN PHYLLO, CHLOROPLASTIC"/>
    <property type="match status" value="1"/>
</dbReference>
<dbReference type="Pfam" id="PF12697">
    <property type="entry name" value="Abhydrolase_6"/>
    <property type="match status" value="1"/>
</dbReference>
<dbReference type="SUPFAM" id="SSF53474">
    <property type="entry name" value="alpha/beta-Hydrolases"/>
    <property type="match status" value="1"/>
</dbReference>
<organism>
    <name type="scientific">Escherichia coli (strain 55989 / EAEC)</name>
    <dbReference type="NCBI Taxonomy" id="585055"/>
    <lineage>
        <taxon>Bacteria</taxon>
        <taxon>Pseudomonadati</taxon>
        <taxon>Pseudomonadota</taxon>
        <taxon>Gammaproteobacteria</taxon>
        <taxon>Enterobacterales</taxon>
        <taxon>Enterobacteriaceae</taxon>
        <taxon>Escherichia</taxon>
    </lineage>
</organism>
<comment type="function">
    <text evidence="1">Catalyzes a proton abstraction reaction that results in 2,5-elimination of pyruvate from 2-succinyl-5-enolpyruvyl-6-hydroxy-3-cyclohexene-1-carboxylate (SEPHCHC) and the formation of 2-succinyl-6-hydroxy-2,4-cyclohexadiene-1-carboxylate (SHCHC).</text>
</comment>
<comment type="catalytic activity">
    <reaction evidence="1">
        <text>5-enolpyruvoyl-6-hydroxy-2-succinyl-cyclohex-3-ene-1-carboxylate = (1R,6R)-6-hydroxy-2-succinyl-cyclohexa-2,4-diene-1-carboxylate + pyruvate</text>
        <dbReference type="Rhea" id="RHEA:25597"/>
        <dbReference type="ChEBI" id="CHEBI:15361"/>
        <dbReference type="ChEBI" id="CHEBI:58689"/>
        <dbReference type="ChEBI" id="CHEBI:58818"/>
        <dbReference type="EC" id="4.2.99.20"/>
    </reaction>
</comment>
<comment type="pathway">
    <text evidence="1">Quinol/quinone metabolism; 1,4-dihydroxy-2-naphthoate biosynthesis; 1,4-dihydroxy-2-naphthoate from chorismate: step 3/7.</text>
</comment>
<comment type="pathway">
    <text evidence="1">Quinol/quinone metabolism; menaquinone biosynthesis.</text>
</comment>
<comment type="subunit">
    <text evidence="1">Monomer.</text>
</comment>
<comment type="similarity">
    <text evidence="1">Belongs to the AB hydrolase superfamily. MenH family.</text>
</comment>
<feature type="chain" id="PRO_1000187105" description="2-succinyl-6-hydroxy-2,4-cyclohexadiene-1-carboxylate synthase">
    <location>
        <begin position="1"/>
        <end position="252"/>
    </location>
</feature>
<evidence type="ECO:0000255" key="1">
    <source>
        <dbReference type="HAMAP-Rule" id="MF_01660"/>
    </source>
</evidence>
<keyword id="KW-0456">Lyase</keyword>
<keyword id="KW-0474">Menaquinone biosynthesis</keyword>
<keyword id="KW-1185">Reference proteome</keyword>